<comment type="function">
    <text evidence="1">Protease subunit of a proteasome-like degradation complex believed to be a general protein degrading machinery.</text>
</comment>
<comment type="catalytic activity">
    <reaction evidence="1">
        <text>ATP-dependent cleavage of peptide bonds with broad specificity.</text>
        <dbReference type="EC" id="3.4.25.2"/>
    </reaction>
</comment>
<comment type="activity regulation">
    <text evidence="1">Allosterically activated by HslU binding.</text>
</comment>
<comment type="subunit">
    <text evidence="1">A double ring-shaped homohexamer of HslV is capped on each side by a ring-shaped HslU homohexamer. The assembly of the HslU/HslV complex is dependent on binding of ATP.</text>
</comment>
<comment type="subcellular location">
    <subcellularLocation>
        <location evidence="1">Cytoplasm</location>
    </subcellularLocation>
</comment>
<comment type="similarity">
    <text evidence="1">Belongs to the peptidase T1B family. HslV subfamily.</text>
</comment>
<feature type="chain" id="PRO_1000078433" description="ATP-dependent protease subunit HslV">
    <location>
        <begin position="1"/>
        <end position="181"/>
    </location>
</feature>
<feature type="active site" evidence="1">
    <location>
        <position position="9"/>
    </location>
</feature>
<feature type="binding site" evidence="1">
    <location>
        <position position="166"/>
    </location>
    <ligand>
        <name>Na(+)</name>
        <dbReference type="ChEBI" id="CHEBI:29101"/>
    </ligand>
</feature>
<feature type="binding site" evidence="1">
    <location>
        <position position="169"/>
    </location>
    <ligand>
        <name>Na(+)</name>
        <dbReference type="ChEBI" id="CHEBI:29101"/>
    </ligand>
</feature>
<feature type="binding site" evidence="1">
    <location>
        <position position="172"/>
    </location>
    <ligand>
        <name>Na(+)</name>
        <dbReference type="ChEBI" id="CHEBI:29101"/>
    </ligand>
</feature>
<gene>
    <name evidence="1" type="primary">hslV</name>
    <name type="ordered locus">SaurJH9_1313</name>
</gene>
<protein>
    <recommendedName>
        <fullName evidence="1">ATP-dependent protease subunit HslV</fullName>
        <ecNumber evidence="1">3.4.25.2</ecNumber>
    </recommendedName>
</protein>
<dbReference type="EC" id="3.4.25.2" evidence="1"/>
<dbReference type="EMBL" id="CP000703">
    <property type="protein sequence ID" value="ABQ49110.1"/>
    <property type="molecule type" value="Genomic_DNA"/>
</dbReference>
<dbReference type="RefSeq" id="WP_000072681.1">
    <property type="nucleotide sequence ID" value="NC_009487.1"/>
</dbReference>
<dbReference type="SMR" id="A5ISD7"/>
<dbReference type="MEROPS" id="T01.007"/>
<dbReference type="KEGG" id="saj:SaurJH9_1313"/>
<dbReference type="HOGENOM" id="CLU_093872_1_1_9"/>
<dbReference type="GO" id="GO:0009376">
    <property type="term" value="C:HslUV protease complex"/>
    <property type="evidence" value="ECO:0007669"/>
    <property type="project" value="UniProtKB-UniRule"/>
</dbReference>
<dbReference type="GO" id="GO:0005839">
    <property type="term" value="C:proteasome core complex"/>
    <property type="evidence" value="ECO:0007669"/>
    <property type="project" value="InterPro"/>
</dbReference>
<dbReference type="GO" id="GO:0046872">
    <property type="term" value="F:metal ion binding"/>
    <property type="evidence" value="ECO:0007669"/>
    <property type="project" value="UniProtKB-KW"/>
</dbReference>
<dbReference type="GO" id="GO:0004298">
    <property type="term" value="F:threonine-type endopeptidase activity"/>
    <property type="evidence" value="ECO:0007669"/>
    <property type="project" value="UniProtKB-KW"/>
</dbReference>
<dbReference type="GO" id="GO:0051603">
    <property type="term" value="P:proteolysis involved in protein catabolic process"/>
    <property type="evidence" value="ECO:0007669"/>
    <property type="project" value="InterPro"/>
</dbReference>
<dbReference type="CDD" id="cd01913">
    <property type="entry name" value="protease_HslV"/>
    <property type="match status" value="1"/>
</dbReference>
<dbReference type="Gene3D" id="3.60.20.10">
    <property type="entry name" value="Glutamine Phosphoribosylpyrophosphate, subunit 1, domain 1"/>
    <property type="match status" value="1"/>
</dbReference>
<dbReference type="HAMAP" id="MF_00248">
    <property type="entry name" value="HslV"/>
    <property type="match status" value="1"/>
</dbReference>
<dbReference type="InterPro" id="IPR022281">
    <property type="entry name" value="ATP-dep_Prtase_HsIV_su"/>
</dbReference>
<dbReference type="InterPro" id="IPR029055">
    <property type="entry name" value="Ntn_hydrolases_N"/>
</dbReference>
<dbReference type="InterPro" id="IPR001353">
    <property type="entry name" value="Proteasome_sua/b"/>
</dbReference>
<dbReference type="InterPro" id="IPR023333">
    <property type="entry name" value="Proteasome_suB-type"/>
</dbReference>
<dbReference type="NCBIfam" id="TIGR03692">
    <property type="entry name" value="ATP_dep_HslV"/>
    <property type="match status" value="1"/>
</dbReference>
<dbReference type="NCBIfam" id="NF003964">
    <property type="entry name" value="PRK05456.1"/>
    <property type="match status" value="1"/>
</dbReference>
<dbReference type="PANTHER" id="PTHR32194:SF0">
    <property type="entry name" value="ATP-DEPENDENT PROTEASE SUBUNIT HSLV"/>
    <property type="match status" value="1"/>
</dbReference>
<dbReference type="PANTHER" id="PTHR32194">
    <property type="entry name" value="METALLOPROTEASE TLDD"/>
    <property type="match status" value="1"/>
</dbReference>
<dbReference type="Pfam" id="PF00227">
    <property type="entry name" value="Proteasome"/>
    <property type="match status" value="1"/>
</dbReference>
<dbReference type="PIRSF" id="PIRSF039093">
    <property type="entry name" value="HslV"/>
    <property type="match status" value="1"/>
</dbReference>
<dbReference type="SUPFAM" id="SSF56235">
    <property type="entry name" value="N-terminal nucleophile aminohydrolases (Ntn hydrolases)"/>
    <property type="match status" value="1"/>
</dbReference>
<dbReference type="PROSITE" id="PS51476">
    <property type="entry name" value="PROTEASOME_BETA_2"/>
    <property type="match status" value="1"/>
</dbReference>
<accession>A5ISD7</accession>
<reference key="1">
    <citation type="submission" date="2007-05" db="EMBL/GenBank/DDBJ databases">
        <title>Complete sequence of chromosome of Staphylococcus aureus subsp. aureus JH9.</title>
        <authorList>
            <consortium name="US DOE Joint Genome Institute"/>
            <person name="Copeland A."/>
            <person name="Lucas S."/>
            <person name="Lapidus A."/>
            <person name="Barry K."/>
            <person name="Detter J.C."/>
            <person name="Glavina del Rio T."/>
            <person name="Hammon N."/>
            <person name="Israni S."/>
            <person name="Pitluck S."/>
            <person name="Chain P."/>
            <person name="Malfatti S."/>
            <person name="Shin M."/>
            <person name="Vergez L."/>
            <person name="Schmutz J."/>
            <person name="Larimer F."/>
            <person name="Land M."/>
            <person name="Hauser L."/>
            <person name="Kyrpides N."/>
            <person name="Kim E."/>
            <person name="Tomasz A."/>
            <person name="Richardson P."/>
        </authorList>
    </citation>
    <scope>NUCLEOTIDE SEQUENCE [LARGE SCALE GENOMIC DNA]</scope>
    <source>
        <strain>JH9</strain>
    </source>
</reference>
<keyword id="KW-0021">Allosteric enzyme</keyword>
<keyword id="KW-0963">Cytoplasm</keyword>
<keyword id="KW-0378">Hydrolase</keyword>
<keyword id="KW-0479">Metal-binding</keyword>
<keyword id="KW-0645">Protease</keyword>
<keyword id="KW-0915">Sodium</keyword>
<keyword id="KW-0888">Threonine protease</keyword>
<sequence length="181" mass="19572">MSNTTLHATTIYAVRHNGKAAMAGDGQVTLGQQVIMKQTARKVRRLYEGKVLAGFAGSVADAFTLFEKFETKLQQFSGNLERAAVELAQEWRGDKQLRQLEAMLIVMDKDAILVVSGTGEVIAPDDDLIAIGSGGNYALSAGRALKRHASHLSAEEMAYESLKVAADICVFTNDNIVVETL</sequence>
<name>HSLV_STAA9</name>
<organism>
    <name type="scientific">Staphylococcus aureus (strain JH9)</name>
    <dbReference type="NCBI Taxonomy" id="359786"/>
    <lineage>
        <taxon>Bacteria</taxon>
        <taxon>Bacillati</taxon>
        <taxon>Bacillota</taxon>
        <taxon>Bacilli</taxon>
        <taxon>Bacillales</taxon>
        <taxon>Staphylococcaceae</taxon>
        <taxon>Staphylococcus</taxon>
    </lineage>
</organism>
<evidence type="ECO:0000255" key="1">
    <source>
        <dbReference type="HAMAP-Rule" id="MF_00248"/>
    </source>
</evidence>
<proteinExistence type="inferred from homology"/>